<comment type="function">
    <text evidence="1">Catalyzes the cofactor-independent reversible oxidation of gamma-hydroxybutyrate (GHB) to succinic semialdehyde (SSA) coupled to reduction of 2-ketoglutarate (2-KG) to D-2-hydroxyglutarate (D-2-HG). L-3-hydroxybutyrate (L-3-OHB) is also a substrate for HOT when using 2-KG as hydrogen acceptor, resulting in the formation of D-2-HG (By similarity).</text>
</comment>
<comment type="catalytic activity">
    <reaction>
        <text>(S)-3-hydroxybutanoate + 2-oxoglutarate = (R)-2-hydroxyglutarate + acetoacetate</text>
        <dbReference type="Rhea" id="RHEA:23048"/>
        <dbReference type="ChEBI" id="CHEBI:11047"/>
        <dbReference type="ChEBI" id="CHEBI:13705"/>
        <dbReference type="ChEBI" id="CHEBI:15801"/>
        <dbReference type="ChEBI" id="CHEBI:16810"/>
        <dbReference type="EC" id="1.1.99.24"/>
    </reaction>
</comment>
<comment type="catalytic activity">
    <reaction>
        <text>4-hydroxybutanoate + 2-oxoglutarate = (R)-2-hydroxyglutarate + succinate semialdehyde</text>
        <dbReference type="Rhea" id="RHEA:24734"/>
        <dbReference type="ChEBI" id="CHEBI:15801"/>
        <dbReference type="ChEBI" id="CHEBI:16724"/>
        <dbReference type="ChEBI" id="CHEBI:16810"/>
        <dbReference type="ChEBI" id="CHEBI:57706"/>
        <dbReference type="EC" id="1.1.99.24"/>
    </reaction>
</comment>
<comment type="subcellular location">
    <subcellularLocation>
        <location evidence="1">Mitochondrion</location>
    </subcellularLocation>
</comment>
<comment type="similarity">
    <text evidence="3">Belongs to the iron-containing alcohol dehydrogenase family. Hydroxyacid-oxoacid transhydrogenase subfamily.</text>
</comment>
<dbReference type="EC" id="1.1.99.24"/>
<dbReference type="EMBL" id="BC124888">
    <property type="protein sequence ID" value="AAI24889.1"/>
    <property type="molecule type" value="mRNA"/>
</dbReference>
<dbReference type="RefSeq" id="NP_001121274.1">
    <property type="nucleotide sequence ID" value="NM_001127802.1"/>
</dbReference>
<dbReference type="SMR" id="Q08B39"/>
<dbReference type="DNASU" id="100158357"/>
<dbReference type="GeneID" id="100158357"/>
<dbReference type="KEGG" id="xla:100158357"/>
<dbReference type="AGR" id="Xenbase:XB-GENE-966434"/>
<dbReference type="CTD" id="100158357"/>
<dbReference type="Xenbase" id="XB-GENE-966434">
    <property type="gene designation" value="adhfe1.S"/>
</dbReference>
<dbReference type="OrthoDB" id="339764at2759"/>
<dbReference type="Proteomes" id="UP000186698">
    <property type="component" value="Chromosome 6S"/>
</dbReference>
<dbReference type="Bgee" id="100158357">
    <property type="expression patterns" value="Expressed in liver and 12 other cell types or tissues"/>
</dbReference>
<dbReference type="GO" id="GO:0005739">
    <property type="term" value="C:mitochondrion"/>
    <property type="evidence" value="ECO:0000250"/>
    <property type="project" value="UniProtKB"/>
</dbReference>
<dbReference type="GO" id="GO:0004022">
    <property type="term" value="F:alcohol dehydrogenase (NAD+) activity"/>
    <property type="evidence" value="ECO:0000318"/>
    <property type="project" value="GO_Central"/>
</dbReference>
<dbReference type="GO" id="GO:0047988">
    <property type="term" value="F:hydroxyacid-oxoacid transhydrogenase activity"/>
    <property type="evidence" value="ECO:0000250"/>
    <property type="project" value="UniProtKB"/>
</dbReference>
<dbReference type="GO" id="GO:0046872">
    <property type="term" value="F:metal ion binding"/>
    <property type="evidence" value="ECO:0007669"/>
    <property type="project" value="InterPro"/>
</dbReference>
<dbReference type="GO" id="GO:0019552">
    <property type="term" value="P:glutamate catabolic process via 2-hydroxyglutarate"/>
    <property type="evidence" value="ECO:0000250"/>
    <property type="project" value="UniProtKB"/>
</dbReference>
<dbReference type="GO" id="GO:0006629">
    <property type="term" value="P:lipid metabolic process"/>
    <property type="evidence" value="ECO:0007669"/>
    <property type="project" value="UniProtKB-KW"/>
</dbReference>
<dbReference type="CDD" id="cd08190">
    <property type="entry name" value="HOT"/>
    <property type="match status" value="1"/>
</dbReference>
<dbReference type="FunFam" id="1.20.1090.10:FF:000003">
    <property type="entry name" value="Probable hydroxyacid-oxoacid transhydrogenase, mitochondrial"/>
    <property type="match status" value="1"/>
</dbReference>
<dbReference type="FunFam" id="3.40.50.1970:FF:000010">
    <property type="entry name" value="Probable hydroxyacid-oxoacid transhydrogenase, mitochondrial"/>
    <property type="match status" value="1"/>
</dbReference>
<dbReference type="Gene3D" id="3.40.50.1970">
    <property type="match status" value="1"/>
</dbReference>
<dbReference type="Gene3D" id="1.20.1090.10">
    <property type="entry name" value="Dehydroquinate synthase-like - alpha domain"/>
    <property type="match status" value="1"/>
</dbReference>
<dbReference type="InterPro" id="IPR001670">
    <property type="entry name" value="ADH_Fe/GldA"/>
</dbReference>
<dbReference type="InterPro" id="IPR056798">
    <property type="entry name" value="ADH_Fe_C"/>
</dbReference>
<dbReference type="InterPro" id="IPR039697">
    <property type="entry name" value="Alcohol_dehydrogenase_Fe"/>
</dbReference>
<dbReference type="InterPro" id="IPR042157">
    <property type="entry name" value="HOT"/>
</dbReference>
<dbReference type="PANTHER" id="PTHR11496">
    <property type="entry name" value="ALCOHOL DEHYDROGENASE"/>
    <property type="match status" value="1"/>
</dbReference>
<dbReference type="PANTHER" id="PTHR11496:SF83">
    <property type="entry name" value="HYDROXYACID-OXOACID TRANSHYDROGENASE, MITOCHONDRIAL"/>
    <property type="match status" value="1"/>
</dbReference>
<dbReference type="Pfam" id="PF25137">
    <property type="entry name" value="ADH_Fe_C"/>
    <property type="match status" value="1"/>
</dbReference>
<dbReference type="Pfam" id="PF00465">
    <property type="entry name" value="Fe-ADH"/>
    <property type="match status" value="1"/>
</dbReference>
<dbReference type="SUPFAM" id="SSF56796">
    <property type="entry name" value="Dehydroquinate synthase-like"/>
    <property type="match status" value="1"/>
</dbReference>
<keyword id="KW-0443">Lipid metabolism</keyword>
<keyword id="KW-0496">Mitochondrion</keyword>
<keyword id="KW-0560">Oxidoreductase</keyword>
<keyword id="KW-1185">Reference proteome</keyword>
<keyword id="KW-0809">Transit peptide</keyword>
<protein>
    <recommendedName>
        <fullName>Hydroxyacid-oxoacid transhydrogenase, mitochondrial</fullName>
        <shortName>HOT</shortName>
        <ecNumber>1.1.99.24</ecNumber>
    </recommendedName>
    <alternativeName>
        <fullName>Alcohol dehydrogenase iron-containing protein 1</fullName>
        <shortName>ADHFe1</shortName>
    </alternativeName>
</protein>
<evidence type="ECO:0000250" key="1"/>
<evidence type="ECO:0000255" key="2"/>
<evidence type="ECO:0000305" key="3"/>
<organism>
    <name type="scientific">Xenopus laevis</name>
    <name type="common">African clawed frog</name>
    <dbReference type="NCBI Taxonomy" id="8355"/>
    <lineage>
        <taxon>Eukaryota</taxon>
        <taxon>Metazoa</taxon>
        <taxon>Chordata</taxon>
        <taxon>Craniata</taxon>
        <taxon>Vertebrata</taxon>
        <taxon>Euteleostomi</taxon>
        <taxon>Amphibia</taxon>
        <taxon>Batrachia</taxon>
        <taxon>Anura</taxon>
        <taxon>Pipoidea</taxon>
        <taxon>Pipidae</taxon>
        <taxon>Xenopodinae</taxon>
        <taxon>Xenopus</taxon>
        <taxon>Xenopus</taxon>
    </lineage>
</organism>
<gene>
    <name type="primary">adhfe1</name>
</gene>
<sequence length="463" mass="50172">MAAGRDGVIHLLRQLQRASCRCPAHSHTYSQAPATARTTDYAFEMAVSSIRYGENVTQEIGMDLQNWGTRNVCVMTDRNLSELSPVKAVLNSLVKNGINFKLYDSVRVEPTDKSFMDAIEFAKKGQFDAFVAVGGGSVIDTCKAANLYSSSPDSDFLDYVNPPIGKGKAVTVPLKPLIAVPTTSGTGSETTGIAIFDYEELKAKTGIASRAIKPTLGLIDPAHTLSMPERVVANSGFDVLCHSLESYTALPYNMRSPCPTNPINRPAYQGSNPISDVWAKHALRIVAKFLKRAVRNPDDREARFAMHLASSFAGVGFGNAGVHLCHGMSYPIAGHVKTYRAKDYKVDHPLVPHGLSVVLTSPAVFSFTGLMCPERHLEAAEILGADLRTAKIKDAGLILADTLRKFLYDLNVDDGLAAVGYTAEDIPALVKGTLPQERVTKLSPRAHSEEELAALFEASMKLY</sequence>
<reference key="1">
    <citation type="submission" date="2006-10" db="EMBL/GenBank/DDBJ databases">
        <authorList>
            <consortium name="NIH - Xenopus Gene Collection (XGC) project"/>
        </authorList>
    </citation>
    <scope>NUCLEOTIDE SEQUENCE [LARGE SCALE MRNA]</scope>
    <source>
        <tissue>Embryo</tissue>
    </source>
</reference>
<name>HOT_XENLA</name>
<feature type="transit peptide" description="Mitochondrion" evidence="2">
    <location>
        <begin position="1"/>
        <end status="unknown"/>
    </location>
</feature>
<feature type="chain" id="PRO_0000323000" description="Hydroxyacid-oxoacid transhydrogenase, mitochondrial">
    <location>
        <begin status="unknown"/>
        <end position="463"/>
    </location>
</feature>
<proteinExistence type="evidence at transcript level"/>
<accession>Q08B39</accession>